<comment type="function">
    <text evidence="1">Catalyzes the condensation of (S)-aspartate-beta-semialdehyde [(S)-ASA] and pyruvate to 4-hydroxy-tetrahydrodipicolinate (HTPA).</text>
</comment>
<comment type="catalytic activity">
    <reaction evidence="1">
        <text>L-aspartate 4-semialdehyde + pyruvate = (2S,4S)-4-hydroxy-2,3,4,5-tetrahydrodipicolinate + H2O + H(+)</text>
        <dbReference type="Rhea" id="RHEA:34171"/>
        <dbReference type="ChEBI" id="CHEBI:15361"/>
        <dbReference type="ChEBI" id="CHEBI:15377"/>
        <dbReference type="ChEBI" id="CHEBI:15378"/>
        <dbReference type="ChEBI" id="CHEBI:67139"/>
        <dbReference type="ChEBI" id="CHEBI:537519"/>
        <dbReference type="EC" id="4.3.3.7"/>
    </reaction>
</comment>
<comment type="pathway">
    <text evidence="1">Amino-acid biosynthesis; L-lysine biosynthesis via DAP pathway; (S)-tetrahydrodipicolinate from L-aspartate: step 3/4.</text>
</comment>
<comment type="subunit">
    <text evidence="1">Homotetramer; dimer of dimers.</text>
</comment>
<comment type="subcellular location">
    <subcellularLocation>
        <location evidence="1">Cytoplasm</location>
    </subcellularLocation>
</comment>
<comment type="similarity">
    <text evidence="1">Belongs to the DapA family.</text>
</comment>
<comment type="caution">
    <text evidence="2">Was originally thought to be a dihydrodipicolinate synthase (DHDPS), catalyzing the condensation of (S)-aspartate-beta-semialdehyde [(S)-ASA] and pyruvate to dihydrodipicolinate (DHDP). However, it was shown in E.coli that the product of the enzymatic reaction is not dihydrodipicolinate but in fact (4S)-4-hydroxy-2,3,4,5-tetrahydro-(2S)-dipicolinic acid (HTPA), and that the consecutive dehydration reaction leading to DHDP is not spontaneous but catalyzed by DapB.</text>
</comment>
<name>DAPA_RICTY</name>
<keyword id="KW-0028">Amino-acid biosynthesis</keyword>
<keyword id="KW-0963">Cytoplasm</keyword>
<keyword id="KW-0220">Diaminopimelate biosynthesis</keyword>
<keyword id="KW-0456">Lyase</keyword>
<keyword id="KW-0457">Lysine biosynthesis</keyword>
<keyword id="KW-0704">Schiff base</keyword>
<evidence type="ECO:0000255" key="1">
    <source>
        <dbReference type="HAMAP-Rule" id="MF_00418"/>
    </source>
</evidence>
<evidence type="ECO:0000305" key="2"/>
<feature type="chain" id="PRO_0000103148" description="4-hydroxy-tetrahydrodipicolinate synthase">
    <location>
        <begin position="1"/>
        <end position="294"/>
    </location>
</feature>
<feature type="active site" description="Proton donor/acceptor" evidence="1">
    <location>
        <position position="135"/>
    </location>
</feature>
<feature type="active site" description="Schiff-base intermediate with substrate" evidence="1">
    <location>
        <position position="163"/>
    </location>
</feature>
<feature type="binding site" evidence="1">
    <location>
        <position position="47"/>
    </location>
    <ligand>
        <name>pyruvate</name>
        <dbReference type="ChEBI" id="CHEBI:15361"/>
    </ligand>
</feature>
<feature type="binding site" evidence="1">
    <location>
        <position position="205"/>
    </location>
    <ligand>
        <name>pyruvate</name>
        <dbReference type="ChEBI" id="CHEBI:15361"/>
    </ligand>
</feature>
<feature type="site" description="Part of a proton relay during catalysis" evidence="1">
    <location>
        <position position="46"/>
    </location>
</feature>
<feature type="site" description="Part of a proton relay during catalysis" evidence="1">
    <location>
        <position position="109"/>
    </location>
</feature>
<dbReference type="EC" id="4.3.3.7" evidence="1"/>
<dbReference type="EMBL" id="AJ293310">
    <property type="protein sequence ID" value="CAC33722.1"/>
    <property type="molecule type" value="Genomic_DNA"/>
</dbReference>
<dbReference type="EMBL" id="AE017197">
    <property type="protein sequence ID" value="AAU03892.1"/>
    <property type="molecule type" value="Genomic_DNA"/>
</dbReference>
<dbReference type="RefSeq" id="WP_011190876.1">
    <property type="nucleotide sequence ID" value="NC_006142.1"/>
</dbReference>
<dbReference type="SMR" id="Q9AKE4"/>
<dbReference type="KEGG" id="rty:RT0415"/>
<dbReference type="eggNOG" id="COG0329">
    <property type="taxonomic scope" value="Bacteria"/>
</dbReference>
<dbReference type="HOGENOM" id="CLU_049343_7_1_5"/>
<dbReference type="OrthoDB" id="9782828at2"/>
<dbReference type="UniPathway" id="UPA00034">
    <property type="reaction ID" value="UER00017"/>
</dbReference>
<dbReference type="Proteomes" id="UP000000604">
    <property type="component" value="Chromosome"/>
</dbReference>
<dbReference type="GO" id="GO:0005737">
    <property type="term" value="C:cytoplasm"/>
    <property type="evidence" value="ECO:0007669"/>
    <property type="project" value="UniProtKB-SubCell"/>
</dbReference>
<dbReference type="GO" id="GO:0008700">
    <property type="term" value="F:(R,S)-4-hydroxy-2-oxoglutarate aldolase activity"/>
    <property type="evidence" value="ECO:0007669"/>
    <property type="project" value="TreeGrafter"/>
</dbReference>
<dbReference type="GO" id="GO:0008840">
    <property type="term" value="F:4-hydroxy-tetrahydrodipicolinate synthase activity"/>
    <property type="evidence" value="ECO:0007669"/>
    <property type="project" value="UniProtKB-UniRule"/>
</dbReference>
<dbReference type="GO" id="GO:0019877">
    <property type="term" value="P:diaminopimelate biosynthetic process"/>
    <property type="evidence" value="ECO:0007669"/>
    <property type="project" value="UniProtKB-UniRule"/>
</dbReference>
<dbReference type="GO" id="GO:0009436">
    <property type="term" value="P:glyoxylate catabolic process"/>
    <property type="evidence" value="ECO:0007669"/>
    <property type="project" value="TreeGrafter"/>
</dbReference>
<dbReference type="GO" id="GO:0009089">
    <property type="term" value="P:lysine biosynthetic process via diaminopimelate"/>
    <property type="evidence" value="ECO:0007669"/>
    <property type="project" value="UniProtKB-UniRule"/>
</dbReference>
<dbReference type="CDD" id="cd00950">
    <property type="entry name" value="DHDPS"/>
    <property type="match status" value="1"/>
</dbReference>
<dbReference type="Gene3D" id="3.20.20.70">
    <property type="entry name" value="Aldolase class I"/>
    <property type="match status" value="1"/>
</dbReference>
<dbReference type="HAMAP" id="MF_00418">
    <property type="entry name" value="DapA"/>
    <property type="match status" value="1"/>
</dbReference>
<dbReference type="InterPro" id="IPR013785">
    <property type="entry name" value="Aldolase_TIM"/>
</dbReference>
<dbReference type="InterPro" id="IPR005263">
    <property type="entry name" value="DapA"/>
</dbReference>
<dbReference type="InterPro" id="IPR002220">
    <property type="entry name" value="DapA-like"/>
</dbReference>
<dbReference type="InterPro" id="IPR020625">
    <property type="entry name" value="Schiff_base-form_aldolases_AS"/>
</dbReference>
<dbReference type="InterPro" id="IPR020624">
    <property type="entry name" value="Schiff_base-form_aldolases_CS"/>
</dbReference>
<dbReference type="NCBIfam" id="TIGR00674">
    <property type="entry name" value="dapA"/>
    <property type="match status" value="1"/>
</dbReference>
<dbReference type="PANTHER" id="PTHR12128:SF66">
    <property type="entry name" value="4-HYDROXY-2-OXOGLUTARATE ALDOLASE, MITOCHONDRIAL"/>
    <property type="match status" value="1"/>
</dbReference>
<dbReference type="PANTHER" id="PTHR12128">
    <property type="entry name" value="DIHYDRODIPICOLINATE SYNTHASE"/>
    <property type="match status" value="1"/>
</dbReference>
<dbReference type="Pfam" id="PF00701">
    <property type="entry name" value="DHDPS"/>
    <property type="match status" value="1"/>
</dbReference>
<dbReference type="PIRSF" id="PIRSF001365">
    <property type="entry name" value="DHDPS"/>
    <property type="match status" value="1"/>
</dbReference>
<dbReference type="PRINTS" id="PR00146">
    <property type="entry name" value="DHPICSNTHASE"/>
</dbReference>
<dbReference type="SMART" id="SM01130">
    <property type="entry name" value="DHDPS"/>
    <property type="match status" value="1"/>
</dbReference>
<dbReference type="SUPFAM" id="SSF51569">
    <property type="entry name" value="Aldolase"/>
    <property type="match status" value="1"/>
</dbReference>
<dbReference type="PROSITE" id="PS00665">
    <property type="entry name" value="DHDPS_1"/>
    <property type="match status" value="1"/>
</dbReference>
<dbReference type="PROSITE" id="PS00666">
    <property type="entry name" value="DHDPS_2"/>
    <property type="match status" value="1"/>
</dbReference>
<protein>
    <recommendedName>
        <fullName evidence="1">4-hydroxy-tetrahydrodipicolinate synthase</fullName>
        <shortName evidence="1">HTPA synthase</shortName>
        <ecNumber evidence="1">4.3.3.7</ecNumber>
    </recommendedName>
</protein>
<gene>
    <name evidence="1" type="primary">dapA</name>
    <name type="ordered locus">RT0415</name>
</gene>
<accession>Q9AKE4</accession>
<reference key="1">
    <citation type="journal article" date="2001" name="Mol. Biol. Evol.">
        <title>Pseudogenes, junk DNA, and the dynamics of Rickettsia genomes.</title>
        <authorList>
            <person name="Andersson J.O."/>
            <person name="Andersson S.G.E."/>
        </authorList>
    </citation>
    <scope>NUCLEOTIDE SEQUENCE [GENOMIC DNA]</scope>
    <source>
        <strain>ATCC VR-144 / Wilmington</strain>
    </source>
</reference>
<reference key="2">
    <citation type="journal article" date="2004" name="J. Bacteriol.">
        <title>Complete genome sequence of Rickettsia typhi and comparison with sequences of other Rickettsiae.</title>
        <authorList>
            <person name="McLeod M.P."/>
            <person name="Qin X."/>
            <person name="Karpathy S.E."/>
            <person name="Gioia J."/>
            <person name="Highlander S.K."/>
            <person name="Fox G.E."/>
            <person name="McNeill T.Z."/>
            <person name="Jiang H."/>
            <person name="Muzny D."/>
            <person name="Jacob L.S."/>
            <person name="Hawes A.C."/>
            <person name="Sodergren E."/>
            <person name="Gill R."/>
            <person name="Hume J."/>
            <person name="Morgan M."/>
            <person name="Fan G."/>
            <person name="Amin A.G."/>
            <person name="Gibbs R.A."/>
            <person name="Hong C."/>
            <person name="Yu X.-J."/>
            <person name="Walker D.H."/>
            <person name="Weinstock G.M."/>
        </authorList>
    </citation>
    <scope>NUCLEOTIDE SEQUENCE [LARGE SCALE GENOMIC DNA]</scope>
    <source>
        <strain>ATCC VR-144 / Wilmington</strain>
    </source>
</reference>
<organism>
    <name type="scientific">Rickettsia typhi (strain ATCC VR-144 / Wilmington)</name>
    <dbReference type="NCBI Taxonomy" id="257363"/>
    <lineage>
        <taxon>Bacteria</taxon>
        <taxon>Pseudomonadati</taxon>
        <taxon>Pseudomonadota</taxon>
        <taxon>Alphaproteobacteria</taxon>
        <taxon>Rickettsiales</taxon>
        <taxon>Rickettsiaceae</taxon>
        <taxon>Rickettsieae</taxon>
        <taxon>Rickettsia</taxon>
        <taxon>typhus group</taxon>
    </lineage>
</organism>
<sequence>MYNIFKGLITALITPFKNNKLDLYAFESILNQQIKHEVDAVLIAGSTGEANSLSFEEYKLLLKTSVEIVNNRMPIISGCSSNNTAYAIELAIASKKIGVDGFMASPPSYVKPTQHGIYKHFEALHEACNLPIMLYSAPTRSGVDFSDETILRLSKLPRILALKDCGVDLERPMRIRAIVKEDFNILTGNDEVVLAFHAQGVIGWISVTSNIAPKICKELLDKWYNNDIQGALEMHQKLLPLYKALFLESNPIPVKYAAHYLGLCENEIRLPLTEASDSAKKQIKKIITSLSIKI</sequence>
<proteinExistence type="inferred from homology"/>